<name>PP2C4_SCHPO</name>
<reference key="1">
    <citation type="journal article" date="1999" name="Mol. Biol. Cell">
        <title>Vacuole fusion regulated by protein phosphatase 2C in fission yeast.</title>
        <authorList>
            <person name="Gaits F."/>
            <person name="Russell P."/>
        </authorList>
    </citation>
    <scope>NUCLEOTIDE SEQUENCE [GENOMIC DNA]</scope>
    <scope>SUBUNIT</scope>
    <scope>SUBCELLULAR LOCATION</scope>
    <scope>FUNCTION</scope>
    <source>
        <strain>972 / ATCC 24843</strain>
    </source>
</reference>
<reference key="2">
    <citation type="journal article" date="2002" name="Nature">
        <title>The genome sequence of Schizosaccharomyces pombe.</title>
        <authorList>
            <person name="Wood V."/>
            <person name="Gwilliam R."/>
            <person name="Rajandream M.A."/>
            <person name="Lyne M.H."/>
            <person name="Lyne R."/>
            <person name="Stewart A."/>
            <person name="Sgouros J.G."/>
            <person name="Peat N."/>
            <person name="Hayles J."/>
            <person name="Baker S.G."/>
            <person name="Basham D."/>
            <person name="Bowman S."/>
            <person name="Brooks K."/>
            <person name="Brown D."/>
            <person name="Brown S."/>
            <person name="Chillingworth T."/>
            <person name="Churcher C.M."/>
            <person name="Collins M."/>
            <person name="Connor R."/>
            <person name="Cronin A."/>
            <person name="Davis P."/>
            <person name="Feltwell T."/>
            <person name="Fraser A."/>
            <person name="Gentles S."/>
            <person name="Goble A."/>
            <person name="Hamlin N."/>
            <person name="Harris D.E."/>
            <person name="Hidalgo J."/>
            <person name="Hodgson G."/>
            <person name="Holroyd S."/>
            <person name="Hornsby T."/>
            <person name="Howarth S."/>
            <person name="Huckle E.J."/>
            <person name="Hunt S."/>
            <person name="Jagels K."/>
            <person name="James K.D."/>
            <person name="Jones L."/>
            <person name="Jones M."/>
            <person name="Leather S."/>
            <person name="McDonald S."/>
            <person name="McLean J."/>
            <person name="Mooney P."/>
            <person name="Moule S."/>
            <person name="Mungall K.L."/>
            <person name="Murphy L.D."/>
            <person name="Niblett D."/>
            <person name="Odell C."/>
            <person name="Oliver K."/>
            <person name="O'Neil S."/>
            <person name="Pearson D."/>
            <person name="Quail M.A."/>
            <person name="Rabbinowitsch E."/>
            <person name="Rutherford K.M."/>
            <person name="Rutter S."/>
            <person name="Saunders D."/>
            <person name="Seeger K."/>
            <person name="Sharp S."/>
            <person name="Skelton J."/>
            <person name="Simmonds M.N."/>
            <person name="Squares R."/>
            <person name="Squares S."/>
            <person name="Stevens K."/>
            <person name="Taylor K."/>
            <person name="Taylor R.G."/>
            <person name="Tivey A."/>
            <person name="Walsh S.V."/>
            <person name="Warren T."/>
            <person name="Whitehead S."/>
            <person name="Woodward J.R."/>
            <person name="Volckaert G."/>
            <person name="Aert R."/>
            <person name="Robben J."/>
            <person name="Grymonprez B."/>
            <person name="Weltjens I."/>
            <person name="Vanstreels E."/>
            <person name="Rieger M."/>
            <person name="Schaefer M."/>
            <person name="Mueller-Auer S."/>
            <person name="Gabel C."/>
            <person name="Fuchs M."/>
            <person name="Duesterhoeft A."/>
            <person name="Fritzc C."/>
            <person name="Holzer E."/>
            <person name="Moestl D."/>
            <person name="Hilbert H."/>
            <person name="Borzym K."/>
            <person name="Langer I."/>
            <person name="Beck A."/>
            <person name="Lehrach H."/>
            <person name="Reinhardt R."/>
            <person name="Pohl T.M."/>
            <person name="Eger P."/>
            <person name="Zimmermann W."/>
            <person name="Wedler H."/>
            <person name="Wambutt R."/>
            <person name="Purnelle B."/>
            <person name="Goffeau A."/>
            <person name="Cadieu E."/>
            <person name="Dreano S."/>
            <person name="Gloux S."/>
            <person name="Lelaure V."/>
            <person name="Mottier S."/>
            <person name="Galibert F."/>
            <person name="Aves S.J."/>
            <person name="Xiang Z."/>
            <person name="Hunt C."/>
            <person name="Moore K."/>
            <person name="Hurst S.M."/>
            <person name="Lucas M."/>
            <person name="Rochet M."/>
            <person name="Gaillardin C."/>
            <person name="Tallada V.A."/>
            <person name="Garzon A."/>
            <person name="Thode G."/>
            <person name="Daga R.R."/>
            <person name="Cruzado L."/>
            <person name="Jimenez J."/>
            <person name="Sanchez M."/>
            <person name="del Rey F."/>
            <person name="Benito J."/>
            <person name="Dominguez A."/>
            <person name="Revuelta J.L."/>
            <person name="Moreno S."/>
            <person name="Armstrong J."/>
            <person name="Forsburg S.L."/>
            <person name="Cerutti L."/>
            <person name="Lowe T."/>
            <person name="McCombie W.R."/>
            <person name="Paulsen I."/>
            <person name="Potashkin J."/>
            <person name="Shpakovski G.V."/>
            <person name="Ussery D."/>
            <person name="Barrell B.G."/>
            <person name="Nurse P."/>
        </authorList>
    </citation>
    <scope>NUCLEOTIDE SEQUENCE [LARGE SCALE GENOMIC DNA]</scope>
    <source>
        <strain>972 / ATCC 24843</strain>
    </source>
</reference>
<feature type="chain" id="PRO_0000057773" description="Protein phosphatase 2C homolog 4">
    <location>
        <begin position="1"/>
        <end position="383"/>
    </location>
</feature>
<feature type="domain" description="PPM-type phosphatase" evidence="2">
    <location>
        <begin position="51"/>
        <end position="356"/>
    </location>
</feature>
<feature type="binding site" evidence="1">
    <location>
        <position position="92"/>
    </location>
    <ligand>
        <name>Mn(2+)</name>
        <dbReference type="ChEBI" id="CHEBI:29035"/>
        <label>1</label>
    </ligand>
</feature>
<feature type="binding site" evidence="1">
    <location>
        <position position="92"/>
    </location>
    <ligand>
        <name>Mn(2+)</name>
        <dbReference type="ChEBI" id="CHEBI:29035"/>
        <label>2</label>
    </ligand>
</feature>
<feature type="binding site" evidence="1">
    <location>
        <position position="308"/>
    </location>
    <ligand>
        <name>Mn(2+)</name>
        <dbReference type="ChEBI" id="CHEBI:29035"/>
        <label>2</label>
    </ligand>
</feature>
<feature type="binding site" evidence="1">
    <location>
        <position position="347"/>
    </location>
    <ligand>
        <name>Mn(2+)</name>
        <dbReference type="ChEBI" id="CHEBI:29035"/>
        <label>2</label>
    </ligand>
</feature>
<sequence length="383" mass="43569">MSIRFLKRLRAPLYIQNAYCSKNYFYRSFIQYYSPSNGPYLKISMNKAPQSLGLCTARGDSPTNQDRMAYGYLNNLKDTTNRDSPFFYGLFDGHGGTECSEFLSTNLGKIIENQDLNDTEKILKEVHSVGGYMAGLKPPFSLRTVLQSRDEDLLWRARLYYSFLQADMDYLTNYARPSPDSAVPGAVGTVAIITSKNNLSYWESDSYIIHLAHVGDTRALLCDSRTGRAHRLTFQHHPADVEEARRLRRYNMGFSRDSFGQKRFAWVANTRSFGDGYKLKKLGVVAEPQLTSIHSLRDDWSFLTLLSDGITDVVSDDEVVDIIKLSESPQDAANNIIRYAQNVGAVDDITCLVVRLPGWKKRTINDFTKNLRLEKSAYHPRRS</sequence>
<comment type="function">
    <text evidence="3">Has a role in the regulation of vacuole fusion.</text>
</comment>
<comment type="catalytic activity">
    <reaction>
        <text>O-phospho-L-seryl-[protein] + H2O = L-seryl-[protein] + phosphate</text>
        <dbReference type="Rhea" id="RHEA:20629"/>
        <dbReference type="Rhea" id="RHEA-COMP:9863"/>
        <dbReference type="Rhea" id="RHEA-COMP:11604"/>
        <dbReference type="ChEBI" id="CHEBI:15377"/>
        <dbReference type="ChEBI" id="CHEBI:29999"/>
        <dbReference type="ChEBI" id="CHEBI:43474"/>
        <dbReference type="ChEBI" id="CHEBI:83421"/>
        <dbReference type="EC" id="3.1.3.16"/>
    </reaction>
</comment>
<comment type="catalytic activity">
    <reaction>
        <text>O-phospho-L-threonyl-[protein] + H2O = L-threonyl-[protein] + phosphate</text>
        <dbReference type="Rhea" id="RHEA:47004"/>
        <dbReference type="Rhea" id="RHEA-COMP:11060"/>
        <dbReference type="Rhea" id="RHEA-COMP:11605"/>
        <dbReference type="ChEBI" id="CHEBI:15377"/>
        <dbReference type="ChEBI" id="CHEBI:30013"/>
        <dbReference type="ChEBI" id="CHEBI:43474"/>
        <dbReference type="ChEBI" id="CHEBI:61977"/>
        <dbReference type="EC" id="3.1.3.16"/>
    </reaction>
</comment>
<comment type="cofactor">
    <cofactor evidence="1">
        <name>Mg(2+)</name>
        <dbReference type="ChEBI" id="CHEBI:18420"/>
    </cofactor>
    <cofactor evidence="1">
        <name>Mn(2+)</name>
        <dbReference type="ChEBI" id="CHEBI:29035"/>
    </cofactor>
    <text evidence="1">Binds 2 magnesium or manganese ions per subunit.</text>
</comment>
<comment type="subunit">
    <text evidence="3">Monomer.</text>
</comment>
<comment type="interaction">
    <interactant intactId="EBI-7593590">
        <id>O14156</id>
    </interactant>
    <interactant intactId="EBI-3648525">
        <id>Q09892</id>
        <label>sty1</label>
    </interactant>
    <organismsDiffer>false</organismsDiffer>
    <experiments>4</experiments>
</comment>
<comment type="subcellular location">
    <subcellularLocation>
        <location evidence="3">Vacuole membrane</location>
        <topology evidence="3">Peripheral membrane protein</topology>
    </subcellularLocation>
</comment>
<comment type="similarity">
    <text evidence="4">Belongs to the PP2C family.</text>
</comment>
<evidence type="ECO:0000250" key="1"/>
<evidence type="ECO:0000255" key="2">
    <source>
        <dbReference type="PROSITE-ProRule" id="PRU01082"/>
    </source>
</evidence>
<evidence type="ECO:0000269" key="3">
    <source>
    </source>
</evidence>
<evidence type="ECO:0000305" key="4"/>
<organism>
    <name type="scientific">Schizosaccharomyces pombe (strain 972 / ATCC 24843)</name>
    <name type="common">Fission yeast</name>
    <dbReference type="NCBI Taxonomy" id="284812"/>
    <lineage>
        <taxon>Eukaryota</taxon>
        <taxon>Fungi</taxon>
        <taxon>Dikarya</taxon>
        <taxon>Ascomycota</taxon>
        <taxon>Taphrinomycotina</taxon>
        <taxon>Schizosaccharomycetes</taxon>
        <taxon>Schizosaccharomycetales</taxon>
        <taxon>Schizosaccharomycetaceae</taxon>
        <taxon>Schizosaccharomyces</taxon>
    </lineage>
</organism>
<accession>O14156</accession>
<accession>Q9UR02</accession>
<keyword id="KW-0378">Hydrolase</keyword>
<keyword id="KW-0460">Magnesium</keyword>
<keyword id="KW-0464">Manganese</keyword>
<keyword id="KW-0472">Membrane</keyword>
<keyword id="KW-0479">Metal-binding</keyword>
<keyword id="KW-0904">Protein phosphatase</keyword>
<keyword id="KW-1185">Reference proteome</keyword>
<keyword id="KW-0926">Vacuole</keyword>
<proteinExistence type="evidence at protein level"/>
<gene>
    <name type="primary">ptc4</name>
    <name type="ORF">SPAC4A8.03c</name>
</gene>
<protein>
    <recommendedName>
        <fullName>Protein phosphatase 2C homolog 4</fullName>
        <shortName>PP2C-4</shortName>
        <ecNumber>3.1.3.16</ecNumber>
    </recommendedName>
</protein>
<dbReference type="EC" id="3.1.3.16"/>
<dbReference type="EMBL" id="AF140285">
    <property type="protein sequence ID" value="AAD27651.1"/>
    <property type="molecule type" value="Genomic_DNA"/>
</dbReference>
<dbReference type="EMBL" id="CU329670">
    <property type="protein sequence ID" value="CAB58554.1"/>
    <property type="molecule type" value="Genomic_DNA"/>
</dbReference>
<dbReference type="PIR" id="T38772">
    <property type="entry name" value="T38772"/>
</dbReference>
<dbReference type="RefSeq" id="NP_593814.1">
    <property type="nucleotide sequence ID" value="NM_001019244.2"/>
</dbReference>
<dbReference type="SMR" id="O14156"/>
<dbReference type="BioGRID" id="279527">
    <property type="interactions" value="4"/>
</dbReference>
<dbReference type="FunCoup" id="O14156">
    <property type="interactions" value="45"/>
</dbReference>
<dbReference type="IntAct" id="O14156">
    <property type="interactions" value="2"/>
</dbReference>
<dbReference type="MINT" id="O14156"/>
<dbReference type="STRING" id="284812.O14156"/>
<dbReference type="iPTMnet" id="O14156"/>
<dbReference type="SwissPalm" id="O14156"/>
<dbReference type="PaxDb" id="4896-SPAC4A8.03c.1"/>
<dbReference type="EnsemblFungi" id="SPAC4A8.03c.1">
    <property type="protein sequence ID" value="SPAC4A8.03c.1:pep"/>
    <property type="gene ID" value="SPAC4A8.03c"/>
</dbReference>
<dbReference type="GeneID" id="2543095"/>
<dbReference type="KEGG" id="spo:2543095"/>
<dbReference type="PomBase" id="SPAC4A8.03c">
    <property type="gene designation" value="ptc4"/>
</dbReference>
<dbReference type="VEuPathDB" id="FungiDB:SPAC4A8.03c"/>
<dbReference type="eggNOG" id="KOG0698">
    <property type="taxonomic scope" value="Eukaryota"/>
</dbReference>
<dbReference type="HOGENOM" id="CLU_021251_0_0_1"/>
<dbReference type="InParanoid" id="O14156"/>
<dbReference type="OMA" id="DERIMGM"/>
<dbReference type="PhylomeDB" id="O14156"/>
<dbReference type="PRO" id="PR:O14156"/>
<dbReference type="Proteomes" id="UP000002485">
    <property type="component" value="Chromosome I"/>
</dbReference>
<dbReference type="GO" id="GO:0005737">
    <property type="term" value="C:cytoplasm"/>
    <property type="evidence" value="ECO:0007005"/>
    <property type="project" value="PomBase"/>
</dbReference>
<dbReference type="GO" id="GO:0000329">
    <property type="term" value="C:fungal-type vacuole membrane"/>
    <property type="evidence" value="ECO:0000314"/>
    <property type="project" value="PomBase"/>
</dbReference>
<dbReference type="GO" id="GO:0005759">
    <property type="term" value="C:mitochondrial matrix"/>
    <property type="evidence" value="ECO:0000314"/>
    <property type="project" value="PomBase"/>
</dbReference>
<dbReference type="GO" id="GO:0005739">
    <property type="term" value="C:mitochondrion"/>
    <property type="evidence" value="ECO:0000318"/>
    <property type="project" value="GO_Central"/>
</dbReference>
<dbReference type="GO" id="GO:0033549">
    <property type="term" value="F:MAP kinase phosphatase activity"/>
    <property type="evidence" value="ECO:0000269"/>
    <property type="project" value="PomBase"/>
</dbReference>
<dbReference type="GO" id="GO:0046872">
    <property type="term" value="F:metal ion binding"/>
    <property type="evidence" value="ECO:0007669"/>
    <property type="project" value="UniProtKB-KW"/>
</dbReference>
<dbReference type="GO" id="GO:0004722">
    <property type="term" value="F:protein serine/threonine phosphatase activity"/>
    <property type="evidence" value="ECO:0000314"/>
    <property type="project" value="PomBase"/>
</dbReference>
<dbReference type="GO" id="GO:0034599">
    <property type="term" value="P:cellular response to oxidative stress"/>
    <property type="evidence" value="ECO:0000315"/>
    <property type="project" value="PomBase"/>
</dbReference>
<dbReference type="GO" id="GO:1901098">
    <property type="term" value="P:positive regulation of autophagosome maturation"/>
    <property type="evidence" value="ECO:0000315"/>
    <property type="project" value="PomBase"/>
</dbReference>
<dbReference type="GO" id="GO:0061191">
    <property type="term" value="P:positive regulation of vacuole fusion, non-autophagic"/>
    <property type="evidence" value="ECO:0000315"/>
    <property type="project" value="PomBase"/>
</dbReference>
<dbReference type="GO" id="GO:1903715">
    <property type="term" value="P:regulation of aerobic respiration"/>
    <property type="evidence" value="ECO:0000315"/>
    <property type="project" value="PomBase"/>
</dbReference>
<dbReference type="GO" id="GO:0007165">
    <property type="term" value="P:signal transduction"/>
    <property type="evidence" value="ECO:0000318"/>
    <property type="project" value="GO_Central"/>
</dbReference>
<dbReference type="CDD" id="cd00143">
    <property type="entry name" value="PP2Cc"/>
    <property type="match status" value="1"/>
</dbReference>
<dbReference type="FunFam" id="3.60.40.10:FF:000112">
    <property type="entry name" value="Ptc6p"/>
    <property type="match status" value="1"/>
</dbReference>
<dbReference type="Gene3D" id="3.60.40.10">
    <property type="entry name" value="PPM-type phosphatase domain"/>
    <property type="match status" value="1"/>
</dbReference>
<dbReference type="InterPro" id="IPR015655">
    <property type="entry name" value="PP2C"/>
</dbReference>
<dbReference type="InterPro" id="IPR000222">
    <property type="entry name" value="PP2C_BS"/>
</dbReference>
<dbReference type="InterPro" id="IPR036457">
    <property type="entry name" value="PPM-type-like_dom_sf"/>
</dbReference>
<dbReference type="InterPro" id="IPR001932">
    <property type="entry name" value="PPM-type_phosphatase-like_dom"/>
</dbReference>
<dbReference type="PANTHER" id="PTHR13832:SF589">
    <property type="entry name" value="[PYRUVATE DEHYDROGENASE [ACETYL-TRANSFERRING]]-PHOSPHATASE 2, MITOCHONDRIAL"/>
    <property type="match status" value="1"/>
</dbReference>
<dbReference type="PANTHER" id="PTHR13832">
    <property type="entry name" value="PROTEIN PHOSPHATASE 2C"/>
    <property type="match status" value="1"/>
</dbReference>
<dbReference type="Pfam" id="PF00481">
    <property type="entry name" value="PP2C"/>
    <property type="match status" value="1"/>
</dbReference>
<dbReference type="SMART" id="SM00332">
    <property type="entry name" value="PP2Cc"/>
    <property type="match status" value="1"/>
</dbReference>
<dbReference type="SUPFAM" id="SSF81606">
    <property type="entry name" value="PP2C-like"/>
    <property type="match status" value="1"/>
</dbReference>
<dbReference type="PROSITE" id="PS01032">
    <property type="entry name" value="PPM_1"/>
    <property type="match status" value="1"/>
</dbReference>
<dbReference type="PROSITE" id="PS51746">
    <property type="entry name" value="PPM_2"/>
    <property type="match status" value="1"/>
</dbReference>